<sequence>MASANHPESGSISGYDHGSRRILIVTGLSGAGKSSILRVLEDLGHEVVDNPPLNLIQALASRAGQNLAIGIDVRSRGFEASRVLEELERLRLLPDCSVQLLYATAEPEILLRRFTATRRRHPLVTSGTILPGIEQETALLAPLRANADLVIDTSDLPSPELRQLIETRFGSTGGEGLTVALMSFAYPSGLPREADMVFDARFLRNPHYDPTLQPMTGLDEAVVQYVKSDPAYPAFFGHIQSLLELVLPRFVAEGKKYATIAIGCSGGRHRSVTIVEELARILPKTVPVGPMMVLHRELARKGLASWRWAVPPQDPSQDTTV</sequence>
<name>Y815_GLUOX</name>
<organism>
    <name type="scientific">Gluconobacter oxydans (strain 621H)</name>
    <name type="common">Gluconobacter suboxydans</name>
    <dbReference type="NCBI Taxonomy" id="290633"/>
    <lineage>
        <taxon>Bacteria</taxon>
        <taxon>Pseudomonadati</taxon>
        <taxon>Pseudomonadota</taxon>
        <taxon>Alphaproteobacteria</taxon>
        <taxon>Acetobacterales</taxon>
        <taxon>Acetobacteraceae</taxon>
        <taxon>Gluconobacter</taxon>
    </lineage>
</organism>
<feature type="chain" id="PRO_0000107714" description="Nucleotide-binding protein GOX0815">
    <location>
        <begin position="1"/>
        <end position="321"/>
    </location>
</feature>
<feature type="binding site" evidence="1">
    <location>
        <begin position="27"/>
        <end position="34"/>
    </location>
    <ligand>
        <name>ATP</name>
        <dbReference type="ChEBI" id="CHEBI:30616"/>
    </ligand>
</feature>
<feature type="binding site" evidence="1">
    <location>
        <begin position="72"/>
        <end position="75"/>
    </location>
    <ligand>
        <name>GTP</name>
        <dbReference type="ChEBI" id="CHEBI:37565"/>
    </ligand>
</feature>
<evidence type="ECO:0000255" key="1">
    <source>
        <dbReference type="HAMAP-Rule" id="MF_00636"/>
    </source>
</evidence>
<comment type="function">
    <text evidence="1">Displays ATPase and GTPase activities.</text>
</comment>
<comment type="similarity">
    <text evidence="1">Belongs to the RapZ-like family.</text>
</comment>
<accession>Q5FSQ7</accession>
<protein>
    <recommendedName>
        <fullName evidence="1">Nucleotide-binding protein GOX0815</fullName>
    </recommendedName>
</protein>
<proteinExistence type="inferred from homology"/>
<reference key="1">
    <citation type="journal article" date="2005" name="Nat. Biotechnol.">
        <title>Complete genome sequence of the acetic acid bacterium Gluconobacter oxydans.</title>
        <authorList>
            <person name="Prust C."/>
            <person name="Hoffmeister M."/>
            <person name="Liesegang H."/>
            <person name="Wiezer A."/>
            <person name="Fricke W.F."/>
            <person name="Ehrenreich A."/>
            <person name="Gottschalk G."/>
            <person name="Deppenmeier U."/>
        </authorList>
    </citation>
    <scope>NUCLEOTIDE SEQUENCE [LARGE SCALE GENOMIC DNA]</scope>
    <source>
        <strain>621H</strain>
    </source>
</reference>
<keyword id="KW-0067">ATP-binding</keyword>
<keyword id="KW-0342">GTP-binding</keyword>
<keyword id="KW-0547">Nucleotide-binding</keyword>
<keyword id="KW-1185">Reference proteome</keyword>
<dbReference type="EMBL" id="CP000009">
    <property type="protein sequence ID" value="AAW60589.1"/>
    <property type="molecule type" value="Genomic_DNA"/>
</dbReference>
<dbReference type="RefSeq" id="WP_011252385.1">
    <property type="nucleotide sequence ID" value="NC_006677.1"/>
</dbReference>
<dbReference type="SMR" id="Q5FSQ7"/>
<dbReference type="STRING" id="290633.GOX0815"/>
<dbReference type="KEGG" id="gox:GOX0815"/>
<dbReference type="eggNOG" id="COG1660">
    <property type="taxonomic scope" value="Bacteria"/>
</dbReference>
<dbReference type="HOGENOM" id="CLU_059558_0_0_5"/>
<dbReference type="Proteomes" id="UP000006375">
    <property type="component" value="Chromosome"/>
</dbReference>
<dbReference type="GO" id="GO:0005524">
    <property type="term" value="F:ATP binding"/>
    <property type="evidence" value="ECO:0007669"/>
    <property type="project" value="UniProtKB-UniRule"/>
</dbReference>
<dbReference type="GO" id="GO:0005525">
    <property type="term" value="F:GTP binding"/>
    <property type="evidence" value="ECO:0007669"/>
    <property type="project" value="UniProtKB-UniRule"/>
</dbReference>
<dbReference type="Gene3D" id="3.40.50.300">
    <property type="entry name" value="P-loop containing nucleotide triphosphate hydrolases"/>
    <property type="match status" value="1"/>
</dbReference>
<dbReference type="HAMAP" id="MF_00636">
    <property type="entry name" value="RapZ_like"/>
    <property type="match status" value="1"/>
</dbReference>
<dbReference type="InterPro" id="IPR027417">
    <property type="entry name" value="P-loop_NTPase"/>
</dbReference>
<dbReference type="InterPro" id="IPR005337">
    <property type="entry name" value="RapZ-like"/>
</dbReference>
<dbReference type="InterPro" id="IPR053930">
    <property type="entry name" value="RapZ-like_N"/>
</dbReference>
<dbReference type="InterPro" id="IPR053931">
    <property type="entry name" value="RapZ_C"/>
</dbReference>
<dbReference type="NCBIfam" id="NF003828">
    <property type="entry name" value="PRK05416.1"/>
    <property type="match status" value="1"/>
</dbReference>
<dbReference type="PANTHER" id="PTHR30448">
    <property type="entry name" value="RNASE ADAPTER PROTEIN RAPZ"/>
    <property type="match status" value="1"/>
</dbReference>
<dbReference type="PANTHER" id="PTHR30448:SF0">
    <property type="entry name" value="RNASE ADAPTER PROTEIN RAPZ"/>
    <property type="match status" value="1"/>
</dbReference>
<dbReference type="Pfam" id="PF22740">
    <property type="entry name" value="PapZ_C"/>
    <property type="match status" value="1"/>
</dbReference>
<dbReference type="Pfam" id="PF03668">
    <property type="entry name" value="RapZ-like_N"/>
    <property type="match status" value="1"/>
</dbReference>
<dbReference type="PIRSF" id="PIRSF005052">
    <property type="entry name" value="P-loopkin"/>
    <property type="match status" value="1"/>
</dbReference>
<dbReference type="SUPFAM" id="SSF52540">
    <property type="entry name" value="P-loop containing nucleoside triphosphate hydrolases"/>
    <property type="match status" value="1"/>
</dbReference>
<gene>
    <name type="ordered locus">GOX0815</name>
</gene>